<sequence length="1205" mass="133406">MGNLKSVGQEPGPPCGLGLGLGLGLCGKQGPATPAPEPSRAPAPATPHAPEHSPAPNSPTLTRPPEGPKFPRVKNWEVGSITYDTLCAQSQQDGPCTPRRCLGSLVLPRKLQSRPSPGPPPAEQLLSQARDFINQYYSSIKRSGSQAHEERLQEVEAEVATTGTYHLGESELVFGAKQAWRNAPRCVGRIQWGKLQVFDARDCSSAQEMFTYICNHIKYATNRGNLRSAITVFPQRTPGRGDFRIWNSQLVRYAGYRQQDGSVRGDPANVEITELCIQHGWTPGNGRFDVLPLLLQAPDEPPELFALPPELVLEVPLEHPTLEWFAALGLRWYALPAVSNMLLEIGGLEFPAAPFSGWYMSTEIGTRNLCDPHRYNILEDVAVCMDLDTRTTSSLWKDKAAVEINLAVLHSYQLAKVTIVDHHAATASFMKHLENEQKARGGCPADWAWIVPPISGSLTPVFHQEMVNYVLSPAFRYQPDPWKGSAAKGTGIARKKTFKEVANAVKISASLMATVMPKRVKASILYASETVRAQSYAQQLGRLFRKAFDPRVLCMDEYDVVSLEHETLVLVVTSTFGNGDPPENGESFAAALMEMSGPYNGSPRPEQHRSYKIRFNSVSCSDPLVSSWRRKRKESSNTDSAGALGTLRFCVFGLGSRAYPHFCAFARAVDTRLEELGGERLLQLGQGDELCGQEEAFRGWAQAAFQASCETFCVGEDAKAAARDIFSPKRSWKRQRYRLSAQVEGLQLLPGLVHVHRRKMFQATVLSVENLQSSKSTRATILVRLDTEGQEGLQYQPGDHIGICPPNRTGLVEALLSRVEDPTPPTESVGVEQLEKGSPGGPPPSWVRDPRLPPYTLRQALTFFLDITSPPSPRLLRVLSTLAEEPSEQQELETLSQDPRRYEEWKWFRCPTLLEVLEQFPSVALPTPLLLTQLALLQPRYYSVSSAPSTYPGEIHPTVAVLAYRTQDGLGPLHYGVCSTWLGQLKPGDPVPCFIRAAPSFRLPPDPSLPCILVGPGTGIAPFRGFWQERLHDIESKGLQPAPMTLVFGCRCSQLDHLYRDEVQDAQQRGVFGRVLTAFSREPDSPKTYVQDILRTELAAEVHRVLCLERGHMFVCGDVTMATSVLQTVQRILATEGNMELDEAGDVIGVLRDQQRYHEDIFGLTLRTQEVTSRIRTQSFSLQERHLRGAVPWTFDPPGPDTPGP</sequence>
<protein>
    <recommendedName>
        <fullName evidence="11">Nitric oxide synthase 3</fullName>
        <ecNumber evidence="3">1.14.13.39</ecNumber>
    </recommendedName>
    <alternativeName>
        <fullName>Constitutive NOS</fullName>
        <shortName>cNOS</shortName>
    </alternativeName>
    <alternativeName>
        <fullName>EC-NOS</fullName>
    </alternativeName>
    <alternativeName>
        <fullName>NOS type III</fullName>
        <shortName>NOSIII</shortName>
    </alternativeName>
    <alternativeName>
        <fullName evidence="11">Nitric oxide synthase, endothelial</fullName>
        <shortName evidence="11">Endothelial NOS</shortName>
        <shortName evidence="11">eNOS</shortName>
    </alternativeName>
</protein>
<comment type="function">
    <text evidence="3">Produces nitric oxide (NO) which is implicated in vascular smooth muscle relaxation through a cGMP-mediated signal transduction pathway. NO mediates vascular endothelial growth factor (VEGF)-induced angiogenesis in coronary vessels and promotes blood clotting through the activation of platelets (By similarity).</text>
</comment>
<comment type="catalytic activity">
    <reaction evidence="3">
        <text>2 L-arginine + 3 NADPH + 4 O2 + H(+) = 2 L-citrulline + 2 nitric oxide + 3 NADP(+) + 4 H2O</text>
        <dbReference type="Rhea" id="RHEA:19897"/>
        <dbReference type="ChEBI" id="CHEBI:15377"/>
        <dbReference type="ChEBI" id="CHEBI:15378"/>
        <dbReference type="ChEBI" id="CHEBI:15379"/>
        <dbReference type="ChEBI" id="CHEBI:16480"/>
        <dbReference type="ChEBI" id="CHEBI:32682"/>
        <dbReference type="ChEBI" id="CHEBI:57743"/>
        <dbReference type="ChEBI" id="CHEBI:57783"/>
        <dbReference type="ChEBI" id="CHEBI:58349"/>
        <dbReference type="EC" id="1.14.13.39"/>
    </reaction>
    <physiologicalReaction direction="left-to-right" evidence="3">
        <dbReference type="Rhea" id="RHEA:19898"/>
    </physiologicalReaction>
</comment>
<comment type="cofactor">
    <cofactor evidence="3">
        <name>heme b</name>
        <dbReference type="ChEBI" id="CHEBI:60344"/>
    </cofactor>
</comment>
<comment type="cofactor">
    <cofactor evidence="4">
        <name>FAD</name>
        <dbReference type="ChEBI" id="CHEBI:57692"/>
    </cofactor>
    <text evidence="4">Binds 1 FAD.</text>
</comment>
<comment type="cofactor">
    <cofactor evidence="5">
        <name>FMN</name>
        <dbReference type="ChEBI" id="CHEBI:58210"/>
    </cofactor>
    <text evidence="5">Binds 1 FMN.</text>
</comment>
<comment type="cofactor">
    <cofactor evidence="5">
        <name>(6R)-L-erythro-5,6,7,8-tetrahydrobiopterin</name>
        <dbReference type="ChEBI" id="CHEBI:59560"/>
    </cofactor>
    <text evidence="5">Tetrahydrobiopterin (BH4). May stabilize the dimeric form of the enzyme.</text>
</comment>
<comment type="activity regulation">
    <text evidence="1">Stimulated by calcium/calmodulin. Inhibited by NOSIP and NOSTRIN (By similarity).</text>
</comment>
<comment type="subunit">
    <text evidence="3 6">Homodimer. Interacts with NOSIP and NOSTRIN (By similarity). Interacts with HSP90AB1 (By similarity). Forms a complex with ASL, ASS1 and SLC7A1; the complex regulates cell-autonomous L-arginine synthesis and citrulline recycling while channeling extracellular L-arginine to nitric oxide synthesis pathway (By similarity).</text>
</comment>
<comment type="subcellular location">
    <subcellularLocation>
        <location evidence="1">Membrane</location>
        <location evidence="1">Caveola</location>
    </subcellularLocation>
    <subcellularLocation>
        <location evidence="1">Cytoplasm</location>
        <location evidence="1">Cytoskeleton</location>
    </subcellularLocation>
    <subcellularLocation>
        <location evidence="1">Golgi apparatus</location>
    </subcellularLocation>
    <subcellularLocation>
        <location evidence="1">Cell membrane</location>
    </subcellularLocation>
    <text evidence="1">Specifically associates with actin cytoskeleton in the G2 phase of the cell cycle, which is favored by interaction with NOSIP and results in a reduced enzymatic activity.</text>
</comment>
<comment type="induction">
    <text>Repressed by pro-inflammatory cytokines.</text>
</comment>
<comment type="PTM">
    <text evidence="1">Phosphorylation by AMPK at Ser-1179 in the presence of Ca(2+)-calmodulin (CaM) activates activity. In absence of Ca(2+)-calmodulin, AMPK also phosphorylates Thr-497, resulting in inhibition of activity. Phosphorylation of Ser-116 by CDK5 reduces activity (By similarity).</text>
</comment>
<comment type="similarity">
    <text evidence="11">Belongs to the NOS family.</text>
</comment>
<dbReference type="EC" id="1.14.13.39" evidence="3"/>
<dbReference type="EMBL" id="U59924">
    <property type="protein sequence ID" value="AAB39539.1"/>
    <property type="molecule type" value="mRNA"/>
</dbReference>
<dbReference type="EMBL" id="U33832">
    <property type="protein sequence ID" value="AAA84933.1"/>
    <property type="molecule type" value="mRNA"/>
</dbReference>
<dbReference type="RefSeq" id="NP_999460.1">
    <property type="nucleotide sequence ID" value="NM_214295.2"/>
</dbReference>
<dbReference type="BMRB" id="Q28969"/>
<dbReference type="SMR" id="Q28969"/>
<dbReference type="BioGRID" id="1149683">
    <property type="interactions" value="3"/>
</dbReference>
<dbReference type="FunCoup" id="Q28969">
    <property type="interactions" value="167"/>
</dbReference>
<dbReference type="STRING" id="9823.ENSSSCP00000048632"/>
<dbReference type="BindingDB" id="Q28969"/>
<dbReference type="ChEMBL" id="CHEMBL3809"/>
<dbReference type="GlyGen" id="Q28969">
    <property type="glycosylation" value="1 site"/>
</dbReference>
<dbReference type="iPTMnet" id="Q28969"/>
<dbReference type="PaxDb" id="9823-ENSSSCP00000017432"/>
<dbReference type="GeneID" id="397557"/>
<dbReference type="KEGG" id="ssc:397557"/>
<dbReference type="CTD" id="4846"/>
<dbReference type="eggNOG" id="KOG1158">
    <property type="taxonomic scope" value="Eukaryota"/>
</dbReference>
<dbReference type="InParanoid" id="Q28969"/>
<dbReference type="OrthoDB" id="1856718at2759"/>
<dbReference type="Proteomes" id="UP000008227">
    <property type="component" value="Unplaced"/>
</dbReference>
<dbReference type="Proteomes" id="UP000314985">
    <property type="component" value="Unplaced"/>
</dbReference>
<dbReference type="Proteomes" id="UP000694570">
    <property type="component" value="Unplaced"/>
</dbReference>
<dbReference type="Proteomes" id="UP000694571">
    <property type="component" value="Unplaced"/>
</dbReference>
<dbReference type="Proteomes" id="UP000694720">
    <property type="component" value="Unplaced"/>
</dbReference>
<dbReference type="Proteomes" id="UP000694722">
    <property type="component" value="Unplaced"/>
</dbReference>
<dbReference type="Proteomes" id="UP000694723">
    <property type="component" value="Unplaced"/>
</dbReference>
<dbReference type="Proteomes" id="UP000694724">
    <property type="component" value="Unplaced"/>
</dbReference>
<dbReference type="Proteomes" id="UP000694725">
    <property type="component" value="Unplaced"/>
</dbReference>
<dbReference type="Proteomes" id="UP000694726">
    <property type="component" value="Unplaced"/>
</dbReference>
<dbReference type="Proteomes" id="UP000694727">
    <property type="component" value="Unplaced"/>
</dbReference>
<dbReference type="Proteomes" id="UP000694728">
    <property type="component" value="Unplaced"/>
</dbReference>
<dbReference type="GO" id="GO:0005901">
    <property type="term" value="C:caveola"/>
    <property type="evidence" value="ECO:0007669"/>
    <property type="project" value="UniProtKB-SubCell"/>
</dbReference>
<dbReference type="GO" id="GO:0005856">
    <property type="term" value="C:cytoskeleton"/>
    <property type="evidence" value="ECO:0007669"/>
    <property type="project" value="UniProtKB-SubCell"/>
</dbReference>
<dbReference type="GO" id="GO:0005829">
    <property type="term" value="C:cytosol"/>
    <property type="evidence" value="ECO:0000318"/>
    <property type="project" value="GO_Central"/>
</dbReference>
<dbReference type="GO" id="GO:0005794">
    <property type="term" value="C:Golgi apparatus"/>
    <property type="evidence" value="ECO:0007669"/>
    <property type="project" value="UniProtKB-SubCell"/>
</dbReference>
<dbReference type="GO" id="GO:0005634">
    <property type="term" value="C:nucleus"/>
    <property type="evidence" value="ECO:0000318"/>
    <property type="project" value="GO_Central"/>
</dbReference>
<dbReference type="GO" id="GO:0005886">
    <property type="term" value="C:plasma membrane"/>
    <property type="evidence" value="ECO:0000318"/>
    <property type="project" value="GO_Central"/>
</dbReference>
<dbReference type="GO" id="GO:0005516">
    <property type="term" value="F:calmodulin binding"/>
    <property type="evidence" value="ECO:0007669"/>
    <property type="project" value="UniProtKB-KW"/>
</dbReference>
<dbReference type="GO" id="GO:0050660">
    <property type="term" value="F:flavin adenine dinucleotide binding"/>
    <property type="evidence" value="ECO:0000318"/>
    <property type="project" value="GO_Central"/>
</dbReference>
<dbReference type="GO" id="GO:0010181">
    <property type="term" value="F:FMN binding"/>
    <property type="evidence" value="ECO:0000318"/>
    <property type="project" value="GO_Central"/>
</dbReference>
<dbReference type="GO" id="GO:0020037">
    <property type="term" value="F:heme binding"/>
    <property type="evidence" value="ECO:0007669"/>
    <property type="project" value="InterPro"/>
</dbReference>
<dbReference type="GO" id="GO:0046872">
    <property type="term" value="F:metal ion binding"/>
    <property type="evidence" value="ECO:0007669"/>
    <property type="project" value="UniProtKB-KW"/>
</dbReference>
<dbReference type="GO" id="GO:0050661">
    <property type="term" value="F:NADP binding"/>
    <property type="evidence" value="ECO:0007669"/>
    <property type="project" value="InterPro"/>
</dbReference>
<dbReference type="GO" id="GO:0004517">
    <property type="term" value="F:nitric-oxide synthase activity"/>
    <property type="evidence" value="ECO:0000318"/>
    <property type="project" value="GO_Central"/>
</dbReference>
<dbReference type="GO" id="GO:0006527">
    <property type="term" value="P:arginine catabolic process"/>
    <property type="evidence" value="ECO:0000318"/>
    <property type="project" value="GO_Central"/>
</dbReference>
<dbReference type="GO" id="GO:0045776">
    <property type="term" value="P:negative regulation of blood pressure"/>
    <property type="evidence" value="ECO:0000318"/>
    <property type="project" value="GO_Central"/>
</dbReference>
<dbReference type="GO" id="GO:0006809">
    <property type="term" value="P:nitric oxide biosynthetic process"/>
    <property type="evidence" value="ECO:0000318"/>
    <property type="project" value="GO_Central"/>
</dbReference>
<dbReference type="GO" id="GO:0007263">
    <property type="term" value="P:nitric oxide mediated signal transduction"/>
    <property type="evidence" value="ECO:0000318"/>
    <property type="project" value="GO_Central"/>
</dbReference>
<dbReference type="GO" id="GO:0009725">
    <property type="term" value="P:response to hormone"/>
    <property type="evidence" value="ECO:0000318"/>
    <property type="project" value="GO_Central"/>
</dbReference>
<dbReference type="GO" id="GO:0032496">
    <property type="term" value="P:response to lipopolysaccharide"/>
    <property type="evidence" value="ECO:0000318"/>
    <property type="project" value="GO_Central"/>
</dbReference>
<dbReference type="GO" id="GO:0042311">
    <property type="term" value="P:vasodilation"/>
    <property type="evidence" value="ECO:0000315"/>
    <property type="project" value="GO_Central"/>
</dbReference>
<dbReference type="CDD" id="cd00795">
    <property type="entry name" value="NOS_oxygenase_euk"/>
    <property type="match status" value="1"/>
</dbReference>
<dbReference type="FunFam" id="3.90.440.10:FF:000001">
    <property type="entry name" value="Endothelial nitric oxide synthase"/>
    <property type="match status" value="1"/>
</dbReference>
<dbReference type="FunFam" id="1.20.990.10:FF:000005">
    <property type="entry name" value="Nitric oxide synthase"/>
    <property type="match status" value="1"/>
</dbReference>
<dbReference type="FunFam" id="3.40.50.360:FF:000003">
    <property type="entry name" value="Nitric oxide synthase"/>
    <property type="match status" value="1"/>
</dbReference>
<dbReference type="FunFam" id="3.40.50.80:FF:000003">
    <property type="entry name" value="Nitric oxide synthase"/>
    <property type="match status" value="1"/>
</dbReference>
<dbReference type="FunFam" id="3.90.1230.10:FF:000001">
    <property type="entry name" value="Nitric oxide synthase, brain"/>
    <property type="match status" value="1"/>
</dbReference>
<dbReference type="Gene3D" id="3.40.50.360">
    <property type="match status" value="1"/>
</dbReference>
<dbReference type="Gene3D" id="1.20.990.10">
    <property type="entry name" value="NADPH-cytochrome p450 Reductase, Chain A, domain 3"/>
    <property type="match status" value="1"/>
</dbReference>
<dbReference type="Gene3D" id="3.90.340.10">
    <property type="entry name" value="Nitric Oxide Synthase, Chain A, domain 1"/>
    <property type="match status" value="1"/>
</dbReference>
<dbReference type="Gene3D" id="3.90.1230.10">
    <property type="entry name" value="Nitric Oxide Synthase, Chain A, domain 3"/>
    <property type="match status" value="1"/>
</dbReference>
<dbReference type="Gene3D" id="3.90.440.10">
    <property type="entry name" value="Nitric Oxide Synthase,Heme Domain,Chain A domain 2"/>
    <property type="match status" value="1"/>
</dbReference>
<dbReference type="Gene3D" id="3.40.50.80">
    <property type="entry name" value="Nucleotide-binding domain of ferredoxin-NADP reductase (FNR) module"/>
    <property type="match status" value="1"/>
</dbReference>
<dbReference type="Gene3D" id="2.40.30.10">
    <property type="entry name" value="Translation factors"/>
    <property type="match status" value="1"/>
</dbReference>
<dbReference type="InterPro" id="IPR003097">
    <property type="entry name" value="CysJ-like_FAD-binding"/>
</dbReference>
<dbReference type="InterPro" id="IPR017927">
    <property type="entry name" value="FAD-bd_FR_type"/>
</dbReference>
<dbReference type="InterPro" id="IPR001094">
    <property type="entry name" value="Flavdoxin-like"/>
</dbReference>
<dbReference type="InterPro" id="IPR008254">
    <property type="entry name" value="Flavodoxin/NO_synth"/>
</dbReference>
<dbReference type="InterPro" id="IPR001709">
    <property type="entry name" value="Flavoprot_Pyr_Nucl_cyt_Rdtase"/>
</dbReference>
<dbReference type="InterPro" id="IPR029039">
    <property type="entry name" value="Flavoprotein-like_sf"/>
</dbReference>
<dbReference type="InterPro" id="IPR039261">
    <property type="entry name" value="FNR_nucleotide-bd"/>
</dbReference>
<dbReference type="InterPro" id="IPR023173">
    <property type="entry name" value="NADPH_Cyt_P450_Rdtase_alpha"/>
</dbReference>
<dbReference type="InterPro" id="IPR050607">
    <property type="entry name" value="NOS"/>
</dbReference>
<dbReference type="InterPro" id="IPR044943">
    <property type="entry name" value="NOS_dom_1"/>
</dbReference>
<dbReference type="InterPro" id="IPR044940">
    <property type="entry name" value="NOS_dom_2"/>
</dbReference>
<dbReference type="InterPro" id="IPR044944">
    <property type="entry name" value="NOS_dom_3"/>
</dbReference>
<dbReference type="InterPro" id="IPR012144">
    <property type="entry name" value="NOS_euk"/>
</dbReference>
<dbReference type="InterPro" id="IPR004030">
    <property type="entry name" value="NOS_N"/>
</dbReference>
<dbReference type="InterPro" id="IPR036119">
    <property type="entry name" value="NOS_N_sf"/>
</dbReference>
<dbReference type="InterPro" id="IPR001433">
    <property type="entry name" value="OxRdtase_FAD/NAD-bd"/>
</dbReference>
<dbReference type="InterPro" id="IPR017938">
    <property type="entry name" value="Riboflavin_synthase-like_b-brl"/>
</dbReference>
<dbReference type="PANTHER" id="PTHR43410:SF1">
    <property type="entry name" value="NITRIC OXIDE SYNTHASE"/>
    <property type="match status" value="1"/>
</dbReference>
<dbReference type="PANTHER" id="PTHR43410">
    <property type="entry name" value="NITRIC OXIDE SYNTHASE OXYGENASE"/>
    <property type="match status" value="1"/>
</dbReference>
<dbReference type="Pfam" id="PF00667">
    <property type="entry name" value="FAD_binding_1"/>
    <property type="match status" value="1"/>
</dbReference>
<dbReference type="Pfam" id="PF00258">
    <property type="entry name" value="Flavodoxin_1"/>
    <property type="match status" value="1"/>
</dbReference>
<dbReference type="Pfam" id="PF00175">
    <property type="entry name" value="NAD_binding_1"/>
    <property type="match status" value="1"/>
</dbReference>
<dbReference type="Pfam" id="PF02898">
    <property type="entry name" value="NO_synthase"/>
    <property type="match status" value="1"/>
</dbReference>
<dbReference type="PIRSF" id="PIRSF000333">
    <property type="entry name" value="NOS"/>
    <property type="match status" value="1"/>
</dbReference>
<dbReference type="PRINTS" id="PR00369">
    <property type="entry name" value="FLAVODOXIN"/>
</dbReference>
<dbReference type="PRINTS" id="PR00371">
    <property type="entry name" value="FPNCR"/>
</dbReference>
<dbReference type="SUPFAM" id="SSF52343">
    <property type="entry name" value="Ferredoxin reductase-like, C-terminal NADP-linked domain"/>
    <property type="match status" value="1"/>
</dbReference>
<dbReference type="SUPFAM" id="SSF52218">
    <property type="entry name" value="Flavoproteins"/>
    <property type="match status" value="1"/>
</dbReference>
<dbReference type="SUPFAM" id="SSF56512">
    <property type="entry name" value="Nitric oxide (NO) synthase oxygenase domain"/>
    <property type="match status" value="1"/>
</dbReference>
<dbReference type="SUPFAM" id="SSF63380">
    <property type="entry name" value="Riboflavin synthase domain-like"/>
    <property type="match status" value="1"/>
</dbReference>
<dbReference type="PROSITE" id="PS51384">
    <property type="entry name" value="FAD_FR"/>
    <property type="match status" value="1"/>
</dbReference>
<dbReference type="PROSITE" id="PS50902">
    <property type="entry name" value="FLAVODOXIN_LIKE"/>
    <property type="match status" value="1"/>
</dbReference>
<dbReference type="PROSITE" id="PS60001">
    <property type="entry name" value="NOS"/>
    <property type="match status" value="1"/>
</dbReference>
<evidence type="ECO:0000250" key="1"/>
<evidence type="ECO:0000250" key="2">
    <source>
        <dbReference type="UniProtKB" id="P29473"/>
    </source>
</evidence>
<evidence type="ECO:0000250" key="3">
    <source>
        <dbReference type="UniProtKB" id="P29474"/>
    </source>
</evidence>
<evidence type="ECO:0000250" key="4">
    <source>
        <dbReference type="UniProtKB" id="P29476"/>
    </source>
</evidence>
<evidence type="ECO:0000250" key="5">
    <source>
        <dbReference type="UniProtKB" id="P35228"/>
    </source>
</evidence>
<evidence type="ECO:0000250" key="6">
    <source>
        <dbReference type="UniProtKB" id="P70313"/>
    </source>
</evidence>
<evidence type="ECO:0000255" key="7"/>
<evidence type="ECO:0000255" key="8">
    <source>
        <dbReference type="PROSITE-ProRule" id="PRU00088"/>
    </source>
</evidence>
<evidence type="ECO:0000255" key="9">
    <source>
        <dbReference type="PROSITE-ProRule" id="PRU00716"/>
    </source>
</evidence>
<evidence type="ECO:0000256" key="10">
    <source>
        <dbReference type="SAM" id="MobiDB-lite"/>
    </source>
</evidence>
<evidence type="ECO:0000305" key="11"/>
<reference key="1">
    <citation type="journal article" date="1997" name="Comp. Biochem. Physiol.">
        <title>Molecular cloning, characterization and expression of a nitric oxide synthase from porcine pulmonary artery endothelial cells.</title>
        <authorList>
            <person name="Zhang J."/>
            <person name="Patel J.M."/>
            <person name="Block E.R."/>
        </authorList>
    </citation>
    <scope>NUCLEOTIDE SEQUENCE [MRNA]</scope>
    <scope>CHARACTERIZATION</scope>
    <source>
        <tissue>Pulmonary artery</tissue>
    </source>
</reference>
<reference key="2">
    <citation type="submission" date="1995-08" db="EMBL/GenBank/DDBJ databases">
        <authorList>
            <person name="Patel J.M."/>
            <person name="Block E.R."/>
        </authorList>
    </citation>
    <scope>NUCLEOTIDE SEQUENCE [MRNA] OF 1032-1205</scope>
</reference>
<keyword id="KW-0106">Calcium</keyword>
<keyword id="KW-0112">Calmodulin-binding</keyword>
<keyword id="KW-1003">Cell membrane</keyword>
<keyword id="KW-0963">Cytoplasm</keyword>
<keyword id="KW-0206">Cytoskeleton</keyword>
<keyword id="KW-0274">FAD</keyword>
<keyword id="KW-0285">Flavoprotein</keyword>
<keyword id="KW-0288">FMN</keyword>
<keyword id="KW-0333">Golgi apparatus</keyword>
<keyword id="KW-0349">Heme</keyword>
<keyword id="KW-0408">Iron</keyword>
<keyword id="KW-0449">Lipoprotein</keyword>
<keyword id="KW-0472">Membrane</keyword>
<keyword id="KW-0479">Metal-binding</keyword>
<keyword id="KW-0519">Myristate</keyword>
<keyword id="KW-0521">NADP</keyword>
<keyword id="KW-0560">Oxidoreductase</keyword>
<keyword id="KW-0564">Palmitate</keyword>
<keyword id="KW-0597">Phosphoprotein</keyword>
<keyword id="KW-1185">Reference proteome</keyword>
<keyword id="KW-0862">Zinc</keyword>
<organism>
    <name type="scientific">Sus scrofa</name>
    <name type="common">Pig</name>
    <dbReference type="NCBI Taxonomy" id="9823"/>
    <lineage>
        <taxon>Eukaryota</taxon>
        <taxon>Metazoa</taxon>
        <taxon>Chordata</taxon>
        <taxon>Craniata</taxon>
        <taxon>Vertebrata</taxon>
        <taxon>Euteleostomi</taxon>
        <taxon>Mammalia</taxon>
        <taxon>Eutheria</taxon>
        <taxon>Laurasiatheria</taxon>
        <taxon>Artiodactyla</taxon>
        <taxon>Suina</taxon>
        <taxon>Suidae</taxon>
        <taxon>Sus</taxon>
    </lineage>
</organism>
<accession>Q28969</accession>
<feature type="initiator methionine" description="Removed" evidence="2">
    <location>
        <position position="1"/>
    </location>
</feature>
<feature type="chain" id="PRO_0000170945" description="Nitric oxide synthase 3">
    <location>
        <begin position="2"/>
        <end position="1205"/>
    </location>
</feature>
<feature type="domain" description="Flavodoxin-like" evidence="8">
    <location>
        <begin position="522"/>
        <end position="705"/>
    </location>
</feature>
<feature type="domain" description="FAD-binding FR-type" evidence="9">
    <location>
        <begin position="758"/>
        <end position="1004"/>
    </location>
</feature>
<feature type="region of interest" description="Disordered" evidence="10">
    <location>
        <begin position="1"/>
        <end position="73"/>
    </location>
</feature>
<feature type="region of interest" description="Interaction with NOSIP" evidence="1">
    <location>
        <begin position="100"/>
        <end position="488"/>
    </location>
</feature>
<feature type="region of interest" description="Calmodulin-binding" evidence="7">
    <location>
        <begin position="492"/>
        <end position="512"/>
    </location>
</feature>
<feature type="region of interest" description="Disordered" evidence="10">
    <location>
        <begin position="820"/>
        <end position="848"/>
    </location>
</feature>
<feature type="compositionally biased region" description="Gly residues" evidence="10">
    <location>
        <begin position="15"/>
        <end position="27"/>
    </location>
</feature>
<feature type="compositionally biased region" description="Pro residues" evidence="10">
    <location>
        <begin position="33"/>
        <end position="47"/>
    </location>
</feature>
<feature type="binding site" evidence="5">
    <location>
        <position position="96"/>
    </location>
    <ligand>
        <name>Zn(2+)</name>
        <dbReference type="ChEBI" id="CHEBI:29105"/>
        <note>ligand shared between homodimeric partners</note>
    </ligand>
</feature>
<feature type="binding site" evidence="5">
    <location>
        <position position="101"/>
    </location>
    <ligand>
        <name>Zn(2+)</name>
        <dbReference type="ChEBI" id="CHEBI:29105"/>
        <note>ligand shared between homodimeric partners</note>
    </ligand>
</feature>
<feature type="binding site" evidence="3">
    <location>
        <position position="104"/>
    </location>
    <ligand>
        <name>(6R)-L-erythro-5,6,7,8-tetrahydrobiopterin</name>
        <dbReference type="ChEBI" id="CHEBI:59560"/>
    </ligand>
</feature>
<feature type="binding site" description="axial binding residue" evidence="3">
    <location>
        <position position="186"/>
    </location>
    <ligand>
        <name>heme b</name>
        <dbReference type="ChEBI" id="CHEBI:60344"/>
    </ligand>
    <ligandPart>
        <name>Fe</name>
        <dbReference type="ChEBI" id="CHEBI:18248"/>
    </ligandPart>
</feature>
<feature type="binding site" evidence="3">
    <location>
        <position position="249"/>
    </location>
    <ligand>
        <name>L-arginine</name>
        <dbReference type="ChEBI" id="CHEBI:32682"/>
    </ligand>
</feature>
<feature type="binding site" evidence="3">
    <location>
        <position position="358"/>
    </location>
    <ligand>
        <name>L-arginine</name>
        <dbReference type="ChEBI" id="CHEBI:32682"/>
    </ligand>
</feature>
<feature type="binding site" evidence="3">
    <location>
        <position position="359"/>
    </location>
    <ligand>
        <name>L-arginine</name>
        <dbReference type="ChEBI" id="CHEBI:32682"/>
    </ligand>
</feature>
<feature type="binding site" evidence="3">
    <location>
        <position position="363"/>
    </location>
    <ligand>
        <name>L-arginine</name>
        <dbReference type="ChEBI" id="CHEBI:32682"/>
    </ligand>
</feature>
<feature type="binding site" evidence="3">
    <location>
        <position position="368"/>
    </location>
    <ligand>
        <name>L-arginine</name>
        <dbReference type="ChEBI" id="CHEBI:32682"/>
    </ligand>
</feature>
<feature type="binding site" evidence="3">
    <location>
        <position position="448"/>
    </location>
    <ligand>
        <name>(6R)-L-erythro-5,6,7,8-tetrahydrobiopterin</name>
        <dbReference type="ChEBI" id="CHEBI:59560"/>
    </ligand>
</feature>
<feature type="binding site" evidence="3">
    <location>
        <position position="449"/>
    </location>
    <ligand>
        <name>(6R)-L-erythro-5,6,7,8-tetrahydrobiopterin</name>
        <dbReference type="ChEBI" id="CHEBI:59560"/>
    </ligand>
</feature>
<feature type="binding site" evidence="3">
    <location>
        <position position="462"/>
    </location>
    <ligand>
        <name>(6R)-L-erythro-5,6,7,8-tetrahydrobiopterin</name>
        <dbReference type="ChEBI" id="CHEBI:59560"/>
    </ligand>
</feature>
<feature type="binding site" evidence="3">
    <location>
        <position position="477"/>
    </location>
    <ligand>
        <name>heme b</name>
        <dbReference type="ChEBI" id="CHEBI:60344"/>
    </ligand>
</feature>
<feature type="binding site" evidence="5">
    <location>
        <position position="528"/>
    </location>
    <ligand>
        <name>FMN</name>
        <dbReference type="ChEBI" id="CHEBI:58210"/>
    </ligand>
</feature>
<feature type="binding site" evidence="5">
    <location>
        <position position="529"/>
    </location>
    <ligand>
        <name>FMN</name>
        <dbReference type="ChEBI" id="CHEBI:58210"/>
    </ligand>
</feature>
<feature type="binding site" evidence="5">
    <location>
        <position position="530"/>
    </location>
    <ligand>
        <name>FMN</name>
        <dbReference type="ChEBI" id="CHEBI:58210"/>
    </ligand>
</feature>
<feature type="binding site" evidence="5">
    <location>
        <position position="532"/>
    </location>
    <ligand>
        <name>FMN</name>
        <dbReference type="ChEBI" id="CHEBI:58210"/>
    </ligand>
</feature>
<feature type="binding site" evidence="5">
    <location>
        <position position="574"/>
    </location>
    <ligand>
        <name>FMN</name>
        <dbReference type="ChEBI" id="CHEBI:58210"/>
    </ligand>
</feature>
<feature type="binding site" evidence="5">
    <location>
        <position position="575"/>
    </location>
    <ligand>
        <name>FMN</name>
        <dbReference type="ChEBI" id="CHEBI:58210"/>
    </ligand>
</feature>
<feature type="binding site" evidence="5">
    <location>
        <position position="656"/>
    </location>
    <ligand>
        <name>FMN</name>
        <dbReference type="ChEBI" id="CHEBI:58210"/>
    </ligand>
</feature>
<feature type="binding site" evidence="5">
    <location>
        <position position="663"/>
    </location>
    <ligand>
        <name>FMN</name>
        <dbReference type="ChEBI" id="CHEBI:58210"/>
    </ligand>
</feature>
<feature type="binding site" evidence="5">
    <location>
        <position position="689"/>
    </location>
    <ligand>
        <name>FMN</name>
        <dbReference type="ChEBI" id="CHEBI:58210"/>
    </ligand>
</feature>
<feature type="binding site" evidence="5">
    <location>
        <position position="693"/>
    </location>
    <ligand>
        <name>FMN</name>
        <dbReference type="ChEBI" id="CHEBI:58210"/>
    </ligand>
</feature>
<feature type="binding site" evidence="4">
    <location>
        <position position="778"/>
    </location>
    <ligand>
        <name>NADP(+)</name>
        <dbReference type="ChEBI" id="CHEBI:58349"/>
    </ligand>
</feature>
<feature type="binding site" evidence="4">
    <location>
        <position position="800"/>
    </location>
    <ligand>
        <name>FAD</name>
        <dbReference type="ChEBI" id="CHEBI:57692"/>
    </ligand>
</feature>
<feature type="binding site" evidence="4">
    <location>
        <position position="940"/>
    </location>
    <ligand>
        <name>FAD</name>
        <dbReference type="ChEBI" id="CHEBI:57692"/>
    </ligand>
</feature>
<feature type="binding site" evidence="4">
    <location>
        <position position="942"/>
    </location>
    <ligand>
        <name>FAD</name>
        <dbReference type="ChEBI" id="CHEBI:57692"/>
    </ligand>
</feature>
<feature type="binding site" evidence="4">
    <location>
        <position position="943"/>
    </location>
    <ligand>
        <name>FAD</name>
        <dbReference type="ChEBI" id="CHEBI:57692"/>
    </ligand>
</feature>
<feature type="binding site" evidence="4">
    <location>
        <position position="958"/>
    </location>
    <ligand>
        <name>FAD</name>
        <dbReference type="ChEBI" id="CHEBI:57692"/>
    </ligand>
</feature>
<feature type="binding site" evidence="4">
    <location>
        <position position="960"/>
    </location>
    <ligand>
        <name>FAD</name>
        <dbReference type="ChEBI" id="CHEBI:57692"/>
    </ligand>
</feature>
<feature type="binding site" evidence="4">
    <location>
        <position position="964"/>
    </location>
    <ligand>
        <name>FAD</name>
        <dbReference type="ChEBI" id="CHEBI:57692"/>
    </ligand>
</feature>
<feature type="binding site" evidence="4">
    <location>
        <position position="977"/>
    </location>
    <ligand>
        <name>FAD</name>
        <dbReference type="ChEBI" id="CHEBI:57692"/>
    </ligand>
</feature>
<feature type="binding site" evidence="4">
    <location>
        <position position="978"/>
    </location>
    <ligand>
        <name>FAD</name>
        <dbReference type="ChEBI" id="CHEBI:57692"/>
    </ligand>
</feature>
<feature type="binding site" evidence="4">
    <location>
        <position position="979"/>
    </location>
    <ligand>
        <name>FAD</name>
        <dbReference type="ChEBI" id="CHEBI:57692"/>
    </ligand>
</feature>
<feature type="binding site" evidence="4">
    <location>
        <position position="1018"/>
    </location>
    <ligand>
        <name>NADP(+)</name>
        <dbReference type="ChEBI" id="CHEBI:58349"/>
    </ligand>
</feature>
<feature type="binding site" evidence="4">
    <location>
        <position position="1051"/>
    </location>
    <ligand>
        <name>NADP(+)</name>
        <dbReference type="ChEBI" id="CHEBI:58349"/>
    </ligand>
</feature>
<feature type="binding site" evidence="4">
    <location>
        <position position="1080"/>
    </location>
    <ligand>
        <name>NADP(+)</name>
        <dbReference type="ChEBI" id="CHEBI:58349"/>
    </ligand>
</feature>
<feature type="binding site" evidence="4">
    <location>
        <position position="1081"/>
    </location>
    <ligand>
        <name>NADP(+)</name>
        <dbReference type="ChEBI" id="CHEBI:58349"/>
    </ligand>
</feature>
<feature type="binding site" evidence="4">
    <location>
        <position position="1087"/>
    </location>
    <ligand>
        <name>NADP(+)</name>
        <dbReference type="ChEBI" id="CHEBI:58349"/>
    </ligand>
</feature>
<feature type="binding site" evidence="4">
    <location>
        <position position="1089"/>
    </location>
    <ligand>
        <name>NADP(+)</name>
        <dbReference type="ChEBI" id="CHEBI:58349"/>
    </ligand>
</feature>
<feature type="binding site" evidence="4">
    <location>
        <position position="1091"/>
    </location>
    <ligand>
        <name>NADP(+)</name>
        <dbReference type="ChEBI" id="CHEBI:58349"/>
    </ligand>
</feature>
<feature type="modified residue" description="Phosphoserine; by CDK5" evidence="3">
    <location>
        <position position="116"/>
    </location>
</feature>
<feature type="modified residue" description="Phosphothreonine; by AMPK" evidence="2">
    <location>
        <position position="497"/>
    </location>
</feature>
<feature type="modified residue" description="Phosphoserine" evidence="6">
    <location>
        <position position="617"/>
    </location>
</feature>
<feature type="modified residue" description="Phosphoserine" evidence="2">
    <location>
        <position position="635"/>
    </location>
</feature>
<feature type="modified residue" description="Phosphoserine" evidence="3">
    <location>
        <position position="640"/>
    </location>
</feature>
<feature type="modified residue" description="Phosphoserine" evidence="3">
    <location>
        <position position="838"/>
    </location>
</feature>
<feature type="modified residue" description="Phosphothreonine" evidence="6">
    <location>
        <position position="1177"/>
    </location>
</feature>
<feature type="modified residue" description="Phosphoserine; by AMPK" evidence="2">
    <location>
        <position position="1179"/>
    </location>
</feature>
<feature type="modified residue" description="Phosphoserine" evidence="6">
    <location>
        <position position="1181"/>
    </location>
</feature>
<feature type="lipid moiety-binding region" description="N-myristoyl glycine" evidence="1">
    <location>
        <position position="2"/>
    </location>
</feature>
<feature type="lipid moiety-binding region" description="S-palmitoyl cysteine" evidence="1">
    <location>
        <position position="15"/>
    </location>
</feature>
<feature type="lipid moiety-binding region" description="S-palmitoyl cysteine" evidence="1">
    <location>
        <position position="26"/>
    </location>
</feature>
<proteinExistence type="evidence at protein level"/>
<gene>
    <name type="primary">NOS3</name>
    <name type="synonym">NOS</name>
</gene>
<name>NOS3_PIG</name>